<evidence type="ECO:0000250" key="1">
    <source>
        <dbReference type="UniProtKB" id="P68363"/>
    </source>
</evidence>
<evidence type="ECO:0000250" key="2">
    <source>
        <dbReference type="UniProtKB" id="Q13509"/>
    </source>
</evidence>
<evidence type="ECO:0000256" key="3">
    <source>
        <dbReference type="SAM" id="MobiDB-lite"/>
    </source>
</evidence>
<evidence type="ECO:0000305" key="4"/>
<keyword id="KW-0963">Cytoplasm</keyword>
<keyword id="KW-0206">Cytoskeleton</keyword>
<keyword id="KW-0342">GTP-binding</keyword>
<keyword id="KW-0460">Magnesium</keyword>
<keyword id="KW-0479">Metal-binding</keyword>
<keyword id="KW-0493">Microtubule</keyword>
<keyword id="KW-0547">Nucleotide-binding</keyword>
<keyword id="KW-1185">Reference proteome</keyword>
<organism>
    <name type="scientific">Drosophila melanogaster</name>
    <name type="common">Fruit fly</name>
    <dbReference type="NCBI Taxonomy" id="7227"/>
    <lineage>
        <taxon>Eukaryota</taxon>
        <taxon>Metazoa</taxon>
        <taxon>Ecdysozoa</taxon>
        <taxon>Arthropoda</taxon>
        <taxon>Hexapoda</taxon>
        <taxon>Insecta</taxon>
        <taxon>Pterygota</taxon>
        <taxon>Neoptera</taxon>
        <taxon>Endopterygota</taxon>
        <taxon>Diptera</taxon>
        <taxon>Brachycera</taxon>
        <taxon>Muscomorpha</taxon>
        <taxon>Ephydroidea</taxon>
        <taxon>Drosophilidae</taxon>
        <taxon>Drosophila</taxon>
        <taxon>Sophophora</taxon>
    </lineage>
</organism>
<protein>
    <recommendedName>
        <fullName>Tubulin beta-3 chain</fullName>
    </recommendedName>
    <alternativeName>
        <fullName>Beta-3-tubulin</fullName>
    </alternativeName>
</protein>
<dbReference type="EMBL" id="M22335">
    <property type="protein sequence ID" value="AAA28993.1"/>
    <property type="molecule type" value="Genomic_DNA"/>
</dbReference>
<dbReference type="EMBL" id="M22341">
    <property type="protein sequence ID" value="AAA28993.1"/>
    <property type="status" value="JOINED"/>
    <property type="molecule type" value="Genomic_DNA"/>
</dbReference>
<dbReference type="EMBL" id="X16825">
    <property type="protein sequence ID" value="CAA34725.1"/>
    <property type="molecule type" value="Genomic_DNA"/>
</dbReference>
<dbReference type="EMBL" id="X16826">
    <property type="protein sequence ID" value="CAA34726.1"/>
    <property type="molecule type" value="Genomic_DNA"/>
</dbReference>
<dbReference type="EMBL" id="AE013599">
    <property type="protein sequence ID" value="AAF47193.2"/>
    <property type="molecule type" value="Genomic_DNA"/>
</dbReference>
<dbReference type="EMBL" id="BT015991">
    <property type="protein sequence ID" value="AAV36876.1"/>
    <property type="molecule type" value="mRNA"/>
</dbReference>
<dbReference type="EMBL" id="X68393">
    <property type="protein sequence ID" value="CAA48459.1"/>
    <property type="molecule type" value="Genomic_DNA"/>
</dbReference>
<dbReference type="EMBL" id="S60740">
    <property type="protein sequence ID" value="AAD13917.1"/>
    <property type="molecule type" value="Genomic_DNA"/>
</dbReference>
<dbReference type="PIR" id="B27810">
    <property type="entry name" value="B27810"/>
</dbReference>
<dbReference type="PIR" id="S33567">
    <property type="entry name" value="S33567"/>
</dbReference>
<dbReference type="PIR" id="S60269">
    <property type="entry name" value="S60269"/>
</dbReference>
<dbReference type="RefSeq" id="NP_523842.2">
    <property type="nucleotide sequence ID" value="NM_079118.3"/>
</dbReference>
<dbReference type="SMR" id="P08841"/>
<dbReference type="BioGRID" id="63462">
    <property type="interactions" value="27"/>
</dbReference>
<dbReference type="FunCoup" id="P08841">
    <property type="interactions" value="180"/>
</dbReference>
<dbReference type="IntAct" id="P08841">
    <property type="interactions" value="3"/>
</dbReference>
<dbReference type="STRING" id="7227.FBpp0072177"/>
<dbReference type="GlyGen" id="P08841">
    <property type="glycosylation" value="1 site, 1 O-linked glycan (1 site)"/>
</dbReference>
<dbReference type="PaxDb" id="7227-FBpp0072177"/>
<dbReference type="DNASU" id="37888"/>
<dbReference type="EnsemblMetazoa" id="FBtr0072270">
    <property type="protein sequence ID" value="FBpp0072177"/>
    <property type="gene ID" value="FBgn0288686"/>
</dbReference>
<dbReference type="GeneID" id="37888"/>
<dbReference type="KEGG" id="dme:Dmel_CG3401"/>
<dbReference type="AGR" id="FB:FBgn0288686"/>
<dbReference type="CTD" id="37888"/>
<dbReference type="FlyBase" id="FBgn0288686">
    <property type="gene designation" value="betaTub60D"/>
</dbReference>
<dbReference type="VEuPathDB" id="VectorBase:FBgn0288686"/>
<dbReference type="eggNOG" id="KOG1375">
    <property type="taxonomic scope" value="Eukaryota"/>
</dbReference>
<dbReference type="InParanoid" id="P08841"/>
<dbReference type="OMA" id="CQDEMEG"/>
<dbReference type="OrthoDB" id="1662883at2759"/>
<dbReference type="PhylomeDB" id="P08841"/>
<dbReference type="Reactome" id="R-DME-3371497">
    <property type="pathway name" value="HSP90 chaperone cycle for steroid hormone receptors (SHR) in the presence of ligand"/>
</dbReference>
<dbReference type="Reactome" id="R-DME-6798695">
    <property type="pathway name" value="Neutrophil degranulation"/>
</dbReference>
<dbReference type="Reactome" id="R-DME-6807878">
    <property type="pathway name" value="COPI-mediated anterograde transport"/>
</dbReference>
<dbReference type="Reactome" id="R-DME-6811434">
    <property type="pathway name" value="COPI-dependent Golgi-to-ER retrograde traffic"/>
</dbReference>
<dbReference type="Reactome" id="R-DME-6811436">
    <property type="pathway name" value="COPI-independent Golgi-to-ER retrograde traffic"/>
</dbReference>
<dbReference type="Reactome" id="R-DME-983189">
    <property type="pathway name" value="Kinesins"/>
</dbReference>
<dbReference type="SignaLink" id="P08841"/>
<dbReference type="BioGRID-ORCS" id="37888">
    <property type="hits" value="0 hits in 3 CRISPR screens"/>
</dbReference>
<dbReference type="ChiTaRS" id="betaTub60D">
    <property type="organism name" value="fly"/>
</dbReference>
<dbReference type="GenomeRNAi" id="37888"/>
<dbReference type="PRO" id="PR:P08841"/>
<dbReference type="Proteomes" id="UP000000803">
    <property type="component" value="Chromosome 2R"/>
</dbReference>
<dbReference type="Bgee" id="FBgn0003888">
    <property type="expression patterns" value="Expressed in embryonic/larval hemocyte (Drosophila) and 130 other cell types or tissues"/>
</dbReference>
<dbReference type="ExpressionAtlas" id="P08841">
    <property type="expression patterns" value="baseline and differential"/>
</dbReference>
<dbReference type="GO" id="GO:0005737">
    <property type="term" value="C:cytoplasm"/>
    <property type="evidence" value="ECO:0007005"/>
    <property type="project" value="FlyBase"/>
</dbReference>
<dbReference type="GO" id="GO:0005874">
    <property type="term" value="C:microtubule"/>
    <property type="evidence" value="ECO:0000314"/>
    <property type="project" value="FlyBase"/>
</dbReference>
<dbReference type="GO" id="GO:0005525">
    <property type="term" value="F:GTP binding"/>
    <property type="evidence" value="ECO:0007669"/>
    <property type="project" value="UniProtKB-KW"/>
</dbReference>
<dbReference type="GO" id="GO:0003924">
    <property type="term" value="F:GTPase activity"/>
    <property type="evidence" value="ECO:0007669"/>
    <property type="project" value="InterPro"/>
</dbReference>
<dbReference type="GO" id="GO:0046872">
    <property type="term" value="F:metal ion binding"/>
    <property type="evidence" value="ECO:0007669"/>
    <property type="project" value="UniProtKB-KW"/>
</dbReference>
<dbReference type="GO" id="GO:0005200">
    <property type="term" value="F:structural constituent of cytoskeleton"/>
    <property type="evidence" value="ECO:0000314"/>
    <property type="project" value="FlyBase"/>
</dbReference>
<dbReference type="GO" id="GO:0007411">
    <property type="term" value="P:axon guidance"/>
    <property type="evidence" value="ECO:0000315"/>
    <property type="project" value="FlyBase"/>
</dbReference>
<dbReference type="GO" id="GO:0007409">
    <property type="term" value="P:axonogenesis"/>
    <property type="evidence" value="ECO:0000315"/>
    <property type="project" value="FlyBase"/>
</dbReference>
<dbReference type="GO" id="GO:0030537">
    <property type="term" value="P:larval behavior"/>
    <property type="evidence" value="ECO:0000315"/>
    <property type="project" value="FlyBase"/>
</dbReference>
<dbReference type="GO" id="GO:0007017">
    <property type="term" value="P:microtubule-based process"/>
    <property type="evidence" value="ECO:0007669"/>
    <property type="project" value="InterPro"/>
</dbReference>
<dbReference type="GO" id="GO:0009416">
    <property type="term" value="P:response to light stimulus"/>
    <property type="evidence" value="ECO:0000315"/>
    <property type="project" value="FlyBase"/>
</dbReference>
<dbReference type="CDD" id="cd02187">
    <property type="entry name" value="beta_tubulin"/>
    <property type="match status" value="1"/>
</dbReference>
<dbReference type="FunFam" id="1.10.287.600:FF:000006">
    <property type="entry name" value="Tubulin beta chain"/>
    <property type="match status" value="1"/>
</dbReference>
<dbReference type="FunFam" id="3.30.1330.20:FF:000002">
    <property type="entry name" value="Tubulin beta chain"/>
    <property type="match status" value="1"/>
</dbReference>
<dbReference type="FunFam" id="3.40.50.1440:FF:000003">
    <property type="entry name" value="Tubulin beta chain"/>
    <property type="match status" value="1"/>
</dbReference>
<dbReference type="Gene3D" id="1.10.287.600">
    <property type="entry name" value="Helix hairpin bin"/>
    <property type="match status" value="1"/>
</dbReference>
<dbReference type="Gene3D" id="3.30.1330.20">
    <property type="entry name" value="Tubulin/FtsZ, C-terminal domain"/>
    <property type="match status" value="1"/>
</dbReference>
<dbReference type="Gene3D" id="3.40.50.1440">
    <property type="entry name" value="Tubulin/FtsZ, GTPase domain"/>
    <property type="match status" value="1"/>
</dbReference>
<dbReference type="InterPro" id="IPR013838">
    <property type="entry name" value="Beta-tubulin_BS"/>
</dbReference>
<dbReference type="InterPro" id="IPR002453">
    <property type="entry name" value="Beta_tubulin"/>
</dbReference>
<dbReference type="InterPro" id="IPR008280">
    <property type="entry name" value="Tub_FtsZ_C"/>
</dbReference>
<dbReference type="InterPro" id="IPR000217">
    <property type="entry name" value="Tubulin"/>
</dbReference>
<dbReference type="InterPro" id="IPR037103">
    <property type="entry name" value="Tubulin/FtsZ-like_C"/>
</dbReference>
<dbReference type="InterPro" id="IPR018316">
    <property type="entry name" value="Tubulin/FtsZ_2-layer-sand-dom"/>
</dbReference>
<dbReference type="InterPro" id="IPR036525">
    <property type="entry name" value="Tubulin/FtsZ_GTPase_sf"/>
</dbReference>
<dbReference type="InterPro" id="IPR023123">
    <property type="entry name" value="Tubulin_C"/>
</dbReference>
<dbReference type="InterPro" id="IPR017975">
    <property type="entry name" value="Tubulin_CS"/>
</dbReference>
<dbReference type="InterPro" id="IPR003008">
    <property type="entry name" value="Tubulin_FtsZ_GTPase"/>
</dbReference>
<dbReference type="PANTHER" id="PTHR11588">
    <property type="entry name" value="TUBULIN"/>
    <property type="match status" value="1"/>
</dbReference>
<dbReference type="Pfam" id="PF00091">
    <property type="entry name" value="Tubulin"/>
    <property type="match status" value="1"/>
</dbReference>
<dbReference type="Pfam" id="PF03953">
    <property type="entry name" value="Tubulin_C"/>
    <property type="match status" value="1"/>
</dbReference>
<dbReference type="PRINTS" id="PR01163">
    <property type="entry name" value="BETATUBULIN"/>
</dbReference>
<dbReference type="PRINTS" id="PR01161">
    <property type="entry name" value="TUBULIN"/>
</dbReference>
<dbReference type="SMART" id="SM00864">
    <property type="entry name" value="Tubulin"/>
    <property type="match status" value="1"/>
</dbReference>
<dbReference type="SMART" id="SM00865">
    <property type="entry name" value="Tubulin_C"/>
    <property type="match status" value="1"/>
</dbReference>
<dbReference type="SUPFAM" id="SSF55307">
    <property type="entry name" value="Tubulin C-terminal domain-like"/>
    <property type="match status" value="1"/>
</dbReference>
<dbReference type="SUPFAM" id="SSF52490">
    <property type="entry name" value="Tubulin nucleotide-binding domain-like"/>
    <property type="match status" value="1"/>
</dbReference>
<dbReference type="PROSITE" id="PS00227">
    <property type="entry name" value="TUBULIN"/>
    <property type="match status" value="1"/>
</dbReference>
<dbReference type="PROSITE" id="PS00228">
    <property type="entry name" value="TUBULIN_B_AUTOREG"/>
    <property type="match status" value="1"/>
</dbReference>
<name>TBB3_DROME</name>
<reference key="1">
    <citation type="journal article" date="1987" name="Mol. Cell. Biol.">
        <title>Three Drosophila beta-tubulin sequences: a developmentally regulated isoform (beta 3), the testis-specific isoform (beta 2), and an assembly-defective mutation of the testis-specific isoform (B2t8) reveal both an ancient divergence in metazoan isotypes and structural constraints for beta-tubulin function.</title>
        <authorList>
            <person name="Rudolph J.E."/>
            <person name="Kimble M."/>
            <person name="Hoyle H.D."/>
            <person name="Subler M.A."/>
            <person name="Raff E.C."/>
        </authorList>
    </citation>
    <scope>NUCLEOTIDE SEQUENCE [GENOMIC DNA]</scope>
</reference>
<reference key="2">
    <citation type="journal article" date="1993" name="Mol. Cell. Endocrinol.">
        <title>Intronic and 5' flanking sequences of the Drosophila betasub3 tubulin gene are essential to confer ecdysone responsiveness.</title>
        <authorList>
            <person name="Bruhat A."/>
            <person name="Dreau D."/>
            <person name="Drake M.E."/>
            <person name="Tourmente S."/>
            <person name="Chapel S."/>
            <person name="Couderc J.-L."/>
            <person name="Dastugue B."/>
        </authorList>
    </citation>
    <scope>NUCLEOTIDE SEQUENCE [GENOMIC DNA]</scope>
    <source>
        <strain>Canton-S</strain>
        <tissue>Embryo</tissue>
    </source>
</reference>
<reference key="3">
    <citation type="journal article" date="2000" name="Science">
        <title>The genome sequence of Drosophila melanogaster.</title>
        <authorList>
            <person name="Adams M.D."/>
            <person name="Celniker S.E."/>
            <person name="Holt R.A."/>
            <person name="Evans C.A."/>
            <person name="Gocayne J.D."/>
            <person name="Amanatides P.G."/>
            <person name="Scherer S.E."/>
            <person name="Li P.W."/>
            <person name="Hoskins R.A."/>
            <person name="Galle R.F."/>
            <person name="George R.A."/>
            <person name="Lewis S.E."/>
            <person name="Richards S."/>
            <person name="Ashburner M."/>
            <person name="Henderson S.N."/>
            <person name="Sutton G.G."/>
            <person name="Wortman J.R."/>
            <person name="Yandell M.D."/>
            <person name="Zhang Q."/>
            <person name="Chen L.X."/>
            <person name="Brandon R.C."/>
            <person name="Rogers Y.-H.C."/>
            <person name="Blazej R.G."/>
            <person name="Champe M."/>
            <person name="Pfeiffer B.D."/>
            <person name="Wan K.H."/>
            <person name="Doyle C."/>
            <person name="Baxter E.G."/>
            <person name="Helt G."/>
            <person name="Nelson C.R."/>
            <person name="Miklos G.L.G."/>
            <person name="Abril J.F."/>
            <person name="Agbayani A."/>
            <person name="An H.-J."/>
            <person name="Andrews-Pfannkoch C."/>
            <person name="Baldwin D."/>
            <person name="Ballew R.M."/>
            <person name="Basu A."/>
            <person name="Baxendale J."/>
            <person name="Bayraktaroglu L."/>
            <person name="Beasley E.M."/>
            <person name="Beeson K.Y."/>
            <person name="Benos P.V."/>
            <person name="Berman B.P."/>
            <person name="Bhandari D."/>
            <person name="Bolshakov S."/>
            <person name="Borkova D."/>
            <person name="Botchan M.R."/>
            <person name="Bouck J."/>
            <person name="Brokstein P."/>
            <person name="Brottier P."/>
            <person name="Burtis K.C."/>
            <person name="Busam D.A."/>
            <person name="Butler H."/>
            <person name="Cadieu E."/>
            <person name="Center A."/>
            <person name="Chandra I."/>
            <person name="Cherry J.M."/>
            <person name="Cawley S."/>
            <person name="Dahlke C."/>
            <person name="Davenport L.B."/>
            <person name="Davies P."/>
            <person name="de Pablos B."/>
            <person name="Delcher A."/>
            <person name="Deng Z."/>
            <person name="Mays A.D."/>
            <person name="Dew I."/>
            <person name="Dietz S.M."/>
            <person name="Dodson K."/>
            <person name="Doup L.E."/>
            <person name="Downes M."/>
            <person name="Dugan-Rocha S."/>
            <person name="Dunkov B.C."/>
            <person name="Dunn P."/>
            <person name="Durbin K.J."/>
            <person name="Evangelista C.C."/>
            <person name="Ferraz C."/>
            <person name="Ferriera S."/>
            <person name="Fleischmann W."/>
            <person name="Fosler C."/>
            <person name="Gabrielian A.E."/>
            <person name="Garg N.S."/>
            <person name="Gelbart W.M."/>
            <person name="Glasser K."/>
            <person name="Glodek A."/>
            <person name="Gong F."/>
            <person name="Gorrell J.H."/>
            <person name="Gu Z."/>
            <person name="Guan P."/>
            <person name="Harris M."/>
            <person name="Harris N.L."/>
            <person name="Harvey D.A."/>
            <person name="Heiman T.J."/>
            <person name="Hernandez J.R."/>
            <person name="Houck J."/>
            <person name="Hostin D."/>
            <person name="Houston K.A."/>
            <person name="Howland T.J."/>
            <person name="Wei M.-H."/>
            <person name="Ibegwam C."/>
            <person name="Jalali M."/>
            <person name="Kalush F."/>
            <person name="Karpen G.H."/>
            <person name="Ke Z."/>
            <person name="Kennison J.A."/>
            <person name="Ketchum K.A."/>
            <person name="Kimmel B.E."/>
            <person name="Kodira C.D."/>
            <person name="Kraft C.L."/>
            <person name="Kravitz S."/>
            <person name="Kulp D."/>
            <person name="Lai Z."/>
            <person name="Lasko P."/>
            <person name="Lei Y."/>
            <person name="Levitsky A.A."/>
            <person name="Li J.H."/>
            <person name="Li Z."/>
            <person name="Liang Y."/>
            <person name="Lin X."/>
            <person name="Liu X."/>
            <person name="Mattei B."/>
            <person name="McIntosh T.C."/>
            <person name="McLeod M.P."/>
            <person name="McPherson D."/>
            <person name="Merkulov G."/>
            <person name="Milshina N.V."/>
            <person name="Mobarry C."/>
            <person name="Morris J."/>
            <person name="Moshrefi A."/>
            <person name="Mount S.M."/>
            <person name="Moy M."/>
            <person name="Murphy B."/>
            <person name="Murphy L."/>
            <person name="Muzny D.M."/>
            <person name="Nelson D.L."/>
            <person name="Nelson D.R."/>
            <person name="Nelson K.A."/>
            <person name="Nixon K."/>
            <person name="Nusskern D.R."/>
            <person name="Pacleb J.M."/>
            <person name="Palazzolo M."/>
            <person name="Pittman G.S."/>
            <person name="Pan S."/>
            <person name="Pollard J."/>
            <person name="Puri V."/>
            <person name="Reese M.G."/>
            <person name="Reinert K."/>
            <person name="Remington K."/>
            <person name="Saunders R.D.C."/>
            <person name="Scheeler F."/>
            <person name="Shen H."/>
            <person name="Shue B.C."/>
            <person name="Siden-Kiamos I."/>
            <person name="Simpson M."/>
            <person name="Skupski M.P."/>
            <person name="Smith T.J."/>
            <person name="Spier E."/>
            <person name="Spradling A.C."/>
            <person name="Stapleton M."/>
            <person name="Strong R."/>
            <person name="Sun E."/>
            <person name="Svirskas R."/>
            <person name="Tector C."/>
            <person name="Turner R."/>
            <person name="Venter E."/>
            <person name="Wang A.H."/>
            <person name="Wang X."/>
            <person name="Wang Z.-Y."/>
            <person name="Wassarman D.A."/>
            <person name="Weinstock G.M."/>
            <person name="Weissenbach J."/>
            <person name="Williams S.M."/>
            <person name="Woodage T."/>
            <person name="Worley K.C."/>
            <person name="Wu D."/>
            <person name="Yang S."/>
            <person name="Yao Q.A."/>
            <person name="Ye J."/>
            <person name="Yeh R.-F."/>
            <person name="Zaveri J.S."/>
            <person name="Zhan M."/>
            <person name="Zhang G."/>
            <person name="Zhao Q."/>
            <person name="Zheng L."/>
            <person name="Zheng X.H."/>
            <person name="Zhong F.N."/>
            <person name="Zhong W."/>
            <person name="Zhou X."/>
            <person name="Zhu S.C."/>
            <person name="Zhu X."/>
            <person name="Smith H.O."/>
            <person name="Gibbs R.A."/>
            <person name="Myers E.W."/>
            <person name="Rubin G.M."/>
            <person name="Venter J.C."/>
        </authorList>
    </citation>
    <scope>NUCLEOTIDE SEQUENCE [LARGE SCALE GENOMIC DNA]</scope>
    <source>
        <strain>Berkeley</strain>
    </source>
</reference>
<reference key="4">
    <citation type="journal article" date="2002" name="Genome Biol.">
        <title>Annotation of the Drosophila melanogaster euchromatic genome: a systematic review.</title>
        <authorList>
            <person name="Misra S."/>
            <person name="Crosby M.A."/>
            <person name="Mungall C.J."/>
            <person name="Matthews B.B."/>
            <person name="Campbell K.S."/>
            <person name="Hradecky P."/>
            <person name="Huang Y."/>
            <person name="Kaminker J.S."/>
            <person name="Millburn G.H."/>
            <person name="Prochnik S.E."/>
            <person name="Smith C.D."/>
            <person name="Tupy J.L."/>
            <person name="Whitfield E.J."/>
            <person name="Bayraktaroglu L."/>
            <person name="Berman B.P."/>
            <person name="Bettencourt B.R."/>
            <person name="Celniker S.E."/>
            <person name="de Grey A.D.N.J."/>
            <person name="Drysdale R.A."/>
            <person name="Harris N.L."/>
            <person name="Richter J."/>
            <person name="Russo S."/>
            <person name="Schroeder A.J."/>
            <person name="Shu S.Q."/>
            <person name="Stapleton M."/>
            <person name="Yamada C."/>
            <person name="Ashburner M."/>
            <person name="Gelbart W.M."/>
            <person name="Rubin G.M."/>
            <person name="Lewis S.E."/>
        </authorList>
    </citation>
    <scope>GENOME REANNOTATION</scope>
    <source>
        <strain>Berkeley</strain>
    </source>
</reference>
<reference key="5">
    <citation type="submission" date="2004-10" db="EMBL/GenBank/DDBJ databases">
        <authorList>
            <person name="Stapleton M."/>
            <person name="Carlson J.W."/>
            <person name="Chavez C."/>
            <person name="Frise E."/>
            <person name="George R.A."/>
            <person name="Pacleb J.M."/>
            <person name="Park S."/>
            <person name="Wan K.H."/>
            <person name="Yu C."/>
            <person name="Rubin G.M."/>
            <person name="Celniker S.E."/>
        </authorList>
    </citation>
    <scope>NUCLEOTIDE SEQUENCE [LARGE SCALE MRNA]</scope>
    <source>
        <strain>Berkeley</strain>
        <tissue>Embryo</tissue>
    </source>
</reference>
<reference key="6">
    <citation type="journal article" date="1992" name="Development">
        <title>Ultrabithorax is a regulator of beta 3 tubulin expression in the Drosophila visceral mesoderm.</title>
        <authorList>
            <person name="Hinz U."/>
            <person name="Wolk A."/>
            <person name="Renkawitz-Pohl R."/>
        </authorList>
    </citation>
    <scope>NUCLEOTIDE SEQUENCE [GENOMIC DNA] OF 15-21</scope>
    <source>
        <strain>Oregon-R</strain>
    </source>
</reference>
<reference key="7">
    <citation type="journal article" date="1993" name="Insect Biochem. Mol. Biol.">
        <title>Enhancer and silencer elements within the first intron mediate the transcriptional regulation of the beta 3 tubulin gene by 20-hydroxyecdysone in Drosophila Kc cells.</title>
        <authorList>
            <person name="Tourmente S."/>
            <person name="Chapel S."/>
            <person name="Dreau D."/>
            <person name="Drake M.E."/>
            <person name="Bruhat A."/>
            <person name="Couderc J.L."/>
            <person name="Dastugue B."/>
        </authorList>
    </citation>
    <scope>NUCLEOTIDE SEQUENCE [GENOMIC DNA] OF 20-44</scope>
</reference>
<accession>P08841</accession>
<accession>Q6I8M0</accession>
<accession>Q6I8M1</accession>
<accession>Q9W184</accession>
<proteinExistence type="evidence at transcript level"/>
<comment type="function">
    <text>Tubulin is the major constituent of microtubules, a cylinder consisting of laterally associated linear protofilaments composed of alpha- and beta-tubulin heterodimers. Microtubules grow by the addition of GTP-tubulin dimers to the microtubule end, where a stabilizing cap forms. Below the cap, tubulin dimers are in GDP-bound state, owing to GTPase activity of alpha-tubulin.</text>
</comment>
<comment type="cofactor">
    <cofactor evidence="1">
        <name>Mg(2+)</name>
        <dbReference type="ChEBI" id="CHEBI:18420"/>
    </cofactor>
</comment>
<comment type="subunit">
    <text>Dimer of alpha and beta chains. A typical microtubule is a hollow water-filled tube with an outer diameter of 25 nm and an inner diameter of 15 nM. Alpha-beta heterodimers associate head-to-tail to form protofilaments running lengthwise along the microtubule wall with the beta-tubulin subunit facing the microtubule plus end conferring a structural polarity. Microtubules usually have 13 protofilaments but different protofilament numbers can be found in some organisms and specialized cells.</text>
</comment>
<comment type="subcellular location">
    <subcellularLocation>
        <location>Cytoplasm</location>
        <location>Cytoskeleton</location>
    </subcellularLocation>
</comment>
<comment type="miscellaneous">
    <text>Beta-3 is a developmentally regulated isoform.</text>
</comment>
<comment type="similarity">
    <text evidence="4">Belongs to the tubulin family.</text>
</comment>
<feature type="chain" id="PRO_0000048280" description="Tubulin beta-3 chain">
    <location>
        <begin position="1"/>
        <end position="454"/>
    </location>
</feature>
<feature type="region of interest" description="Disordered" evidence="3">
    <location>
        <begin position="435"/>
        <end position="454"/>
    </location>
</feature>
<feature type="binding site" evidence="2">
    <location>
        <position position="11"/>
    </location>
    <ligand>
        <name>GTP</name>
        <dbReference type="ChEBI" id="CHEBI:37565"/>
    </ligand>
</feature>
<feature type="binding site" evidence="1">
    <location>
        <position position="75"/>
    </location>
    <ligand>
        <name>GTP</name>
        <dbReference type="ChEBI" id="CHEBI:37565"/>
    </ligand>
</feature>
<feature type="binding site" evidence="1">
    <location>
        <position position="75"/>
    </location>
    <ligand>
        <name>Mg(2+)</name>
        <dbReference type="ChEBI" id="CHEBI:18420"/>
    </ligand>
</feature>
<feature type="binding site" evidence="2">
    <location>
        <position position="144"/>
    </location>
    <ligand>
        <name>GTP</name>
        <dbReference type="ChEBI" id="CHEBI:37565"/>
    </ligand>
</feature>
<feature type="binding site" evidence="2">
    <location>
        <position position="148"/>
    </location>
    <ligand>
        <name>GTP</name>
        <dbReference type="ChEBI" id="CHEBI:37565"/>
    </ligand>
</feature>
<feature type="binding site" evidence="2">
    <location>
        <position position="149"/>
    </location>
    <ligand>
        <name>GTP</name>
        <dbReference type="ChEBI" id="CHEBI:37565"/>
    </ligand>
</feature>
<feature type="binding site" evidence="2">
    <location>
        <position position="150"/>
    </location>
    <ligand>
        <name>GTP</name>
        <dbReference type="ChEBI" id="CHEBI:37565"/>
    </ligand>
</feature>
<feature type="binding site" evidence="2">
    <location>
        <position position="210"/>
    </location>
    <ligand>
        <name>GTP</name>
        <dbReference type="ChEBI" id="CHEBI:37565"/>
    </ligand>
</feature>
<feature type="binding site" evidence="2">
    <location>
        <position position="232"/>
    </location>
    <ligand>
        <name>GTP</name>
        <dbReference type="ChEBI" id="CHEBI:37565"/>
    </ligand>
</feature>
<feature type="sequence conflict" description="In Ref. 1; AAA28993 and 2; CAA34725." evidence="4" ref="1 2">
    <original>N</original>
    <variation>H</variation>
    <location>
        <position position="6"/>
    </location>
</feature>
<feature type="sequence conflict" description="In Ref. 2; CAA34726." evidence="4" ref="2">
    <original>R</original>
    <variation>G</variation>
    <location>
        <position position="288"/>
    </location>
</feature>
<feature type="sequence conflict" description="In Ref. 2; CAA34726." evidence="4" ref="2">
    <original>V</original>
    <variation>I</variation>
    <location>
        <position position="322"/>
    </location>
</feature>
<feature type="sequence conflict" description="In Ref. 2; CAA34726." evidence="4" ref="2">
    <original>AV</original>
    <variation>NI</variation>
    <location>
        <begin position="338"/>
        <end position="339"/>
    </location>
</feature>
<feature type="sequence conflict" description="In Ref. 1; AAA28993 and 2; CAA34726." evidence="4" ref="1 2">
    <original>K</original>
    <variation>R</variation>
    <location>
        <position position="365"/>
    </location>
</feature>
<gene>
    <name type="primary">betaTub60D</name>
    <name type="synonym">TubB60C</name>
    <name type="ORF">CG3401</name>
</gene>
<sequence>MREIVNLQAGQCGNQIGAKFWEIISEEHGIDSNGIYVGDSDLQLERVSVYYNEASAVTRSSGGKYVPRAILLDLEPGTMESVRSGPYGQLFRPDNFVYGQSGAGNNWAKGHYTEGAELVDNVLDVVRKECENCDCLQGFQLTHSLGGGTGSGMGTLLISKIREEYPDRIMNTYSVVPSPKVSDTVVEPYNATLSIHQLVENTDETYCIDNEALYDICFRTLKVSNPSYGDLNHLVSLTMSGVTTCLRFPGQLNADLRKLAVNMVPFPRLHFFMPGFAPLTSRGSQQYRALTVPELTQQMFDAKNMMAACDPRHGRYLTVAAVFRGRMSMKEVDEQMLAVQNKNSSYFVEWIPNNVKTAVCDIPPKGLKMSSTFIGNTTAIQELFKRISEQFSAMFRRKAFLHWYTGEGMDEMEFTEAESNMNDLVSEYQQYQEATADDEFDPEVNQEEVEGDCI</sequence>